<protein>
    <recommendedName>
        <fullName>Ubiquitin-conjugating enzyme E2 N</fullName>
        <ecNumber>2.3.2.23</ecNumber>
    </recommendedName>
    <alternativeName>
        <fullName>E2 ubiquitin-conjugating enzyme N</fullName>
    </alternativeName>
    <alternativeName>
        <fullName>Ubiquitin carrier protein N</fullName>
    </alternativeName>
    <alternativeName>
        <fullName>Ubiquitin-protein ligase N</fullName>
    </alternativeName>
</protein>
<accession>Q0P5K3</accession>
<sequence>MAGLPRRIIKETQRLLAEPVPGIKAEPDESNARYFHVVIAGPQDSPFEGGTFKLELFLPEEYPMAAPKVRFMTKIYHPNVDKLGRICLDILKDKWSPALQIRTVLLSIQALLSAPNPDDPLANDVAEQWKTNEAQAIETARAWTRLYAMNNI</sequence>
<organism>
    <name type="scientific">Bos taurus</name>
    <name type="common">Bovine</name>
    <dbReference type="NCBI Taxonomy" id="9913"/>
    <lineage>
        <taxon>Eukaryota</taxon>
        <taxon>Metazoa</taxon>
        <taxon>Chordata</taxon>
        <taxon>Craniata</taxon>
        <taxon>Vertebrata</taxon>
        <taxon>Euteleostomi</taxon>
        <taxon>Mammalia</taxon>
        <taxon>Eutheria</taxon>
        <taxon>Laurasiatheria</taxon>
        <taxon>Artiodactyla</taxon>
        <taxon>Ruminantia</taxon>
        <taxon>Pecora</taxon>
        <taxon>Bovidae</taxon>
        <taxon>Bovinae</taxon>
        <taxon>Bos</taxon>
    </lineage>
</organism>
<name>UBE2N_BOVIN</name>
<gene>
    <name type="primary">UBE2N</name>
</gene>
<dbReference type="EC" id="2.3.2.23"/>
<dbReference type="EMBL" id="BC119931">
    <property type="protein sequence ID" value="AAI19932.1"/>
    <property type="molecule type" value="mRNA"/>
</dbReference>
<dbReference type="RefSeq" id="NP_001069726.1">
    <property type="nucleotide sequence ID" value="NM_001076258.1"/>
</dbReference>
<dbReference type="BMRB" id="Q0P5K3"/>
<dbReference type="SMR" id="Q0P5K3"/>
<dbReference type="FunCoup" id="Q0P5K3">
    <property type="interactions" value="3574"/>
</dbReference>
<dbReference type="STRING" id="9913.ENSBTAP00000067744"/>
<dbReference type="PaxDb" id="9913-ENSBTAP00000052296"/>
<dbReference type="PeptideAtlas" id="Q0P5K3"/>
<dbReference type="GeneID" id="541130"/>
<dbReference type="KEGG" id="bta:541130"/>
<dbReference type="CTD" id="7334"/>
<dbReference type="VEuPathDB" id="HostDB:ENSBTAG00000021767"/>
<dbReference type="eggNOG" id="KOG0417">
    <property type="taxonomic scope" value="Eukaryota"/>
</dbReference>
<dbReference type="HOGENOM" id="CLU_030988_13_2_1"/>
<dbReference type="InParanoid" id="Q0P5K3"/>
<dbReference type="OMA" id="AEPHEDN"/>
<dbReference type="OrthoDB" id="7851174at2759"/>
<dbReference type="TreeFam" id="TF101126"/>
<dbReference type="Reactome" id="R-BTA-1169408">
    <property type="pathway name" value="ISG15 antiviral mechanism"/>
</dbReference>
<dbReference type="Reactome" id="R-BTA-450302">
    <property type="pathway name" value="activated TAK1 mediates p38 MAPK activation"/>
</dbReference>
<dbReference type="Reactome" id="R-BTA-450321">
    <property type="pathway name" value="JNK (c-Jun kinases) phosphorylation and activation mediated by activated human TAK1"/>
</dbReference>
<dbReference type="Reactome" id="R-BTA-5693565">
    <property type="pathway name" value="Recruitment and ATM-mediated phosphorylation of repair and signaling proteins at DNA double strand breaks"/>
</dbReference>
<dbReference type="Reactome" id="R-BTA-5693571">
    <property type="pathway name" value="Nonhomologous End-Joining (NHEJ)"/>
</dbReference>
<dbReference type="Reactome" id="R-BTA-5693607">
    <property type="pathway name" value="Processing of DNA double-strand break ends"/>
</dbReference>
<dbReference type="Reactome" id="R-BTA-5696395">
    <property type="pathway name" value="Formation of Incision Complex in GG-NER"/>
</dbReference>
<dbReference type="Reactome" id="R-BTA-69473">
    <property type="pathway name" value="G2/M DNA damage checkpoint"/>
</dbReference>
<dbReference type="Reactome" id="R-BTA-8866654">
    <property type="pathway name" value="E3 ubiquitin ligases ubiquitinate target proteins"/>
</dbReference>
<dbReference type="Reactome" id="R-BTA-9020702">
    <property type="pathway name" value="Interleukin-1 signaling"/>
</dbReference>
<dbReference type="Reactome" id="R-BTA-9646399">
    <property type="pathway name" value="Aggrephagy"/>
</dbReference>
<dbReference type="Reactome" id="R-BTA-983168">
    <property type="pathway name" value="Antigen processing: Ubiquitination &amp; Proteasome degradation"/>
</dbReference>
<dbReference type="UniPathway" id="UPA00143"/>
<dbReference type="Proteomes" id="UP000009136">
    <property type="component" value="Chromosome 5"/>
</dbReference>
<dbReference type="Bgee" id="ENSBTAG00000021767">
    <property type="expression patterns" value="Expressed in spermatid and 103 other cell types or tissues"/>
</dbReference>
<dbReference type="GO" id="GO:0005634">
    <property type="term" value="C:nucleus"/>
    <property type="evidence" value="ECO:0000318"/>
    <property type="project" value="GO_Central"/>
</dbReference>
<dbReference type="GO" id="GO:0031372">
    <property type="term" value="C:UBC13-MMS2 complex"/>
    <property type="evidence" value="ECO:0000250"/>
    <property type="project" value="UniProtKB"/>
</dbReference>
<dbReference type="GO" id="GO:0000151">
    <property type="term" value="C:ubiquitin ligase complex"/>
    <property type="evidence" value="ECO:0000250"/>
    <property type="project" value="UniProtKB"/>
</dbReference>
<dbReference type="GO" id="GO:0005524">
    <property type="term" value="F:ATP binding"/>
    <property type="evidence" value="ECO:0007669"/>
    <property type="project" value="UniProtKB-KW"/>
</dbReference>
<dbReference type="GO" id="GO:0061631">
    <property type="term" value="F:ubiquitin conjugating enzyme activity"/>
    <property type="evidence" value="ECO:0000250"/>
    <property type="project" value="UniProtKB"/>
</dbReference>
<dbReference type="GO" id="GO:0004842">
    <property type="term" value="F:ubiquitin-protein transferase activity"/>
    <property type="evidence" value="ECO:0000250"/>
    <property type="project" value="UniProtKB"/>
</dbReference>
<dbReference type="GO" id="GO:0006301">
    <property type="term" value="P:postreplication repair"/>
    <property type="evidence" value="ECO:0000318"/>
    <property type="project" value="GO_Central"/>
</dbReference>
<dbReference type="GO" id="GO:0070534">
    <property type="term" value="P:protein K63-linked ubiquitination"/>
    <property type="evidence" value="ECO:0000250"/>
    <property type="project" value="UniProtKB"/>
</dbReference>
<dbReference type="CDD" id="cd23813">
    <property type="entry name" value="UBCc_UBE2N"/>
    <property type="match status" value="1"/>
</dbReference>
<dbReference type="FunFam" id="3.10.110.10:FF:000015">
    <property type="entry name" value="Ubiquitin-conjugating enzyme E2 N"/>
    <property type="match status" value="1"/>
</dbReference>
<dbReference type="Gene3D" id="3.10.110.10">
    <property type="entry name" value="Ubiquitin Conjugating Enzyme"/>
    <property type="match status" value="1"/>
</dbReference>
<dbReference type="InterPro" id="IPR000608">
    <property type="entry name" value="UBQ-conjugat_E2_core"/>
</dbReference>
<dbReference type="InterPro" id="IPR023313">
    <property type="entry name" value="UBQ-conjugating_AS"/>
</dbReference>
<dbReference type="InterPro" id="IPR016135">
    <property type="entry name" value="UBQ-conjugating_enzyme/RWD"/>
</dbReference>
<dbReference type="PANTHER" id="PTHR24068">
    <property type="entry name" value="UBIQUITIN-CONJUGATING ENZYME E2"/>
    <property type="match status" value="1"/>
</dbReference>
<dbReference type="Pfam" id="PF00179">
    <property type="entry name" value="UQ_con"/>
    <property type="match status" value="1"/>
</dbReference>
<dbReference type="SMART" id="SM00212">
    <property type="entry name" value="UBCc"/>
    <property type="match status" value="1"/>
</dbReference>
<dbReference type="SUPFAM" id="SSF54495">
    <property type="entry name" value="UBC-like"/>
    <property type="match status" value="1"/>
</dbReference>
<dbReference type="PROSITE" id="PS00183">
    <property type="entry name" value="UBC_1"/>
    <property type="match status" value="1"/>
</dbReference>
<dbReference type="PROSITE" id="PS50127">
    <property type="entry name" value="UBC_2"/>
    <property type="match status" value="1"/>
</dbReference>
<comment type="function">
    <text evidence="1">The UBE2V1-UBE2N and UBE2V2-UBE2N heterodimers catalyze the synthesis of non-canonical 'Lys-63'-linked polyubiquitin chains. This type of polyubiquitination does not lead to protein degradation by the proteasome. Mediates transcriptional activation of target genes. Plays a role in the control of progress through the cell cycle and differentiation. Plays a role in the error-free DNA repair pathway and contributes to the survival of cells after DNA damage. Acts together with the E3 ligases, HLTF and SHPRH, in the 'Lys-63'-linked poly-ubiquitination of PCNA upon genotoxic stress, which is required for DNA repair. Appears to act together with E3 ligase RNF5 in the 'Lys-63'-linked polyubiquitination of JKAMP thereby regulating JKAMP function by decreasing its association with components of the proteasome and ERAD. Promotes TRIM5 capsid-specific restriction activity and the UBE2V1-UBE2N heterodimer acts in concert with TRIM5 to generate 'Lys-63'-linked polyubiquitin chains which activate the MAP3K7/TAK1 complex which in turn results in the induction and expression of NF-kappa-B and MAPK-responsive inflammatory genes. Together with RNF135 and UB2V1, catalyzes the viral RNA-dependent 'Lys-63'-linked polyubiquitination of RIGI to activate the downstream signaling pathway that leads to interferon beta production (By similarity). UBE2V1-UBE2N together with TRAF3IP2 E3 ubiquitin ligase mediate 'Lys-63'-linked polyubiquitination of TRAF6, a component of IL17A-mediated signaling pathway.</text>
</comment>
<comment type="catalytic activity">
    <reaction evidence="3 4">
        <text>S-ubiquitinyl-[E1 ubiquitin-activating enzyme]-L-cysteine + [E2 ubiquitin-conjugating enzyme]-L-cysteine = [E1 ubiquitin-activating enzyme]-L-cysteine + S-ubiquitinyl-[E2 ubiquitin-conjugating enzyme]-L-cysteine.</text>
        <dbReference type="EC" id="2.3.2.23"/>
    </reaction>
</comment>
<comment type="activity regulation">
    <text evidence="1 2">Activity is inhibited by binding to OTUB1, which prevents 'Lys-63'-linked polyubiquitination (By similarity). Activity is inhibited by GPS2, leading to prevent 'Lys-63'-linked polyubiquitination (By similarity).</text>
</comment>
<comment type="pathway">
    <text evidence="3">Protein modification; protein ubiquitination.</text>
</comment>
<comment type="subunit">
    <text evidence="1 2">Heterodimer with UBE2V2 (By similarity). Interacts (UBE2V2-UBE2N heterodimer) with the E3 ligase STUB1 (via the U-box domain); the complex has a specific 'Lys-63'-linked polyubiquitination activity (By similarity). Interacts with RNF8 and RNF168 (By similarity). Interacts with RNF11 (By similarity). Interacts with the E3 ligases, HLTF and SHPRH; the interactions promote the 'Lys-63'-linked polyubiquitination of PCNA upon genotoxic stress and lead to DNA repair (By similarity). Interacts with ARIH2 (via RING-type 2) (By similarity). Interacts with OTUB1; leading to inhibit E2-conjugating activity (By similarity). Interacts with GPS2; leading to inhibit E2-conjugating activity (By similarity). Interacts with RIGI and RNF135; involved in RIGI ubiquitination and activation (By similarity).</text>
</comment>
<comment type="PTM">
    <text evidence="1">Conjugation to ISG15 impairs formation of the thioester bond with ubiquitin but not interaction with UBE2V2.</text>
</comment>
<comment type="similarity">
    <text evidence="3">Belongs to the ubiquitin-conjugating enzyme family.</text>
</comment>
<evidence type="ECO:0000250" key="1">
    <source>
        <dbReference type="UniProtKB" id="P61088"/>
    </source>
</evidence>
<evidence type="ECO:0000250" key="2">
    <source>
        <dbReference type="UniProtKB" id="P61089"/>
    </source>
</evidence>
<evidence type="ECO:0000255" key="3">
    <source>
        <dbReference type="PROSITE-ProRule" id="PRU00388"/>
    </source>
</evidence>
<evidence type="ECO:0000255" key="4">
    <source>
        <dbReference type="PROSITE-ProRule" id="PRU10133"/>
    </source>
</evidence>
<proteinExistence type="evidence at transcript level"/>
<reference key="1">
    <citation type="submission" date="2006-08" db="EMBL/GenBank/DDBJ databases">
        <authorList>
            <consortium name="NIH - Mammalian Gene Collection (MGC) project"/>
        </authorList>
    </citation>
    <scope>NUCLEOTIDE SEQUENCE [LARGE SCALE MRNA]</scope>
    <source>
        <strain>Hereford</strain>
        <tissue>Fetal skin</tissue>
    </source>
</reference>
<keyword id="KW-0007">Acetylation</keyword>
<keyword id="KW-0067">ATP-binding</keyword>
<keyword id="KW-0227">DNA damage</keyword>
<keyword id="KW-0234">DNA repair</keyword>
<keyword id="KW-1017">Isopeptide bond</keyword>
<keyword id="KW-0547">Nucleotide-binding</keyword>
<keyword id="KW-1185">Reference proteome</keyword>
<keyword id="KW-0808">Transferase</keyword>
<keyword id="KW-0832">Ubl conjugation</keyword>
<keyword id="KW-0833">Ubl conjugation pathway</keyword>
<feature type="chain" id="PRO_0000278832" description="Ubiquitin-conjugating enzyme E2 N">
    <location>
        <begin position="1"/>
        <end position="152"/>
    </location>
</feature>
<feature type="domain" description="UBC core" evidence="3">
    <location>
        <begin position="3"/>
        <end position="149"/>
    </location>
</feature>
<feature type="active site" description="Glycyl thioester intermediate" evidence="3">
    <location>
        <position position="87"/>
    </location>
</feature>
<feature type="modified residue" description="N6-acetyllysine" evidence="1">
    <location>
        <position position="82"/>
    </location>
</feature>
<feature type="cross-link" description="Glycyl lysine isopeptide (Lys-Gly) (interchain with G-Cter in ISG15)" evidence="1">
    <location>
        <position position="92"/>
    </location>
</feature>